<evidence type="ECO:0000255" key="1">
    <source>
        <dbReference type="HAMAP-Rule" id="MF_01961"/>
    </source>
</evidence>
<keyword id="KW-0349">Heme</keyword>
<keyword id="KW-0376">Hydrogen peroxide</keyword>
<keyword id="KW-0408">Iron</keyword>
<keyword id="KW-0479">Metal-binding</keyword>
<keyword id="KW-0560">Oxidoreductase</keyword>
<keyword id="KW-0575">Peroxidase</keyword>
<organism>
    <name type="scientific">Xanthomonas campestris pv. campestris (strain 8004)</name>
    <dbReference type="NCBI Taxonomy" id="314565"/>
    <lineage>
        <taxon>Bacteria</taxon>
        <taxon>Pseudomonadati</taxon>
        <taxon>Pseudomonadota</taxon>
        <taxon>Gammaproteobacteria</taxon>
        <taxon>Lysobacterales</taxon>
        <taxon>Lysobacteraceae</taxon>
        <taxon>Xanthomonas</taxon>
    </lineage>
</organism>
<feature type="chain" id="PRO_0000354956" description="Catalase-peroxidase">
    <location>
        <begin position="1"/>
        <end position="748"/>
    </location>
</feature>
<feature type="active site" description="Proton acceptor" evidence="1">
    <location>
        <position position="93"/>
    </location>
</feature>
<feature type="binding site" description="axial binding residue" evidence="1">
    <location>
        <position position="279"/>
    </location>
    <ligand>
        <name>heme b</name>
        <dbReference type="ChEBI" id="CHEBI:60344"/>
    </ligand>
    <ligandPart>
        <name>Fe</name>
        <dbReference type="ChEBI" id="CHEBI:18248"/>
    </ligandPart>
</feature>
<feature type="site" description="Transition state stabilizer" evidence="1">
    <location>
        <position position="89"/>
    </location>
</feature>
<feature type="cross-link" description="Tryptophyl-tyrosyl-methioninium (Trp-Tyr) (with M-264)" evidence="1">
    <location>
        <begin position="92"/>
        <end position="238"/>
    </location>
</feature>
<feature type="cross-link" description="Tryptophyl-tyrosyl-methioninium (Tyr-Met) (with W-92)" evidence="1">
    <location>
        <begin position="238"/>
        <end position="264"/>
    </location>
</feature>
<sequence>MTTEAKCPFNHSVVGAGTTNRDWWPKQLRVDLLNQHSARSNPLAASFNYAEAFKRLDLQTLKQELRALMTDSQDWWPADFGHYGPLFVRMAWHSAGTYRTGDGRGGGGRGQQRFAPLNSWPDNVSLDKARRLLWPIKQKYGQAISWADLMILTGNVALESMGFKTFGFAGGREDTWEPDQDLYWGRETKWLGGDDRYAHGSPGVDQAHGVLVKDDDSEVQHTRDLENPLAAVQMGLIYVNPEGPDGNPDPLLAAKDIRDTFGRMAMNDEETVALIAGGHTFGKTHGAADAAHVAAEPEASDLESQGLGWHNSFGSGKGGDTITSGLEVTWTTTPAQWSNDFFDHLFGFEWELSKSPAGAHQWVAKNAQAIIPDAHDASKKRLPTMLTTDLALRIDPAYEAISRRFHANPDQFADAFARAWFKLTHRDMGPRARYLGADVPAEELLWQDPIPALNHALIDAQDAAALKQTVLSSGLSVAQLVATAWASASSFRGSDKRGGANGARIRLAPQKDWASNEPAQLAQVLATLERIQADFNARQSGGKQISLADLIVLGGNAAVEQAAHAAGHAVTVPFAPGRMDASQAQTDVESFAVLEPVADGFRNYAKARYAVSAEALLIDKAQLLTLTAPEMTVLVGGLRVLGANTGQSHNGVFTTRPGVLSNDFFANLLDMRTEWKATSETKETYEGRDRATGEHKWTGTRVDLVFGSNSILRAVAEVYASADAQEKFVQDFVAAWTKVMQLDRFDLA</sequence>
<dbReference type="EC" id="1.11.1.21" evidence="1"/>
<dbReference type="EMBL" id="CP000050">
    <property type="protein sequence ID" value="AAY50085.1"/>
    <property type="molecule type" value="Genomic_DNA"/>
</dbReference>
<dbReference type="RefSeq" id="WP_011036402.1">
    <property type="nucleotide sequence ID" value="NZ_CP155948.1"/>
</dbReference>
<dbReference type="SMR" id="Q4US88"/>
<dbReference type="PeroxiBase" id="3417">
    <property type="entry name" value="XccCP01_8004"/>
</dbReference>
<dbReference type="KEGG" id="xcb:XC_3037"/>
<dbReference type="HOGENOM" id="CLU_025424_2_0_6"/>
<dbReference type="Proteomes" id="UP000000420">
    <property type="component" value="Chromosome"/>
</dbReference>
<dbReference type="GO" id="GO:0005829">
    <property type="term" value="C:cytosol"/>
    <property type="evidence" value="ECO:0007669"/>
    <property type="project" value="TreeGrafter"/>
</dbReference>
<dbReference type="GO" id="GO:0004096">
    <property type="term" value="F:catalase activity"/>
    <property type="evidence" value="ECO:0007669"/>
    <property type="project" value="UniProtKB-UniRule"/>
</dbReference>
<dbReference type="GO" id="GO:0020037">
    <property type="term" value="F:heme binding"/>
    <property type="evidence" value="ECO:0007669"/>
    <property type="project" value="InterPro"/>
</dbReference>
<dbReference type="GO" id="GO:0046872">
    <property type="term" value="F:metal ion binding"/>
    <property type="evidence" value="ECO:0007669"/>
    <property type="project" value="UniProtKB-KW"/>
</dbReference>
<dbReference type="GO" id="GO:0070301">
    <property type="term" value="P:cellular response to hydrogen peroxide"/>
    <property type="evidence" value="ECO:0007669"/>
    <property type="project" value="TreeGrafter"/>
</dbReference>
<dbReference type="GO" id="GO:0042744">
    <property type="term" value="P:hydrogen peroxide catabolic process"/>
    <property type="evidence" value="ECO:0007669"/>
    <property type="project" value="UniProtKB-KW"/>
</dbReference>
<dbReference type="CDD" id="cd00649">
    <property type="entry name" value="catalase_peroxidase_1"/>
    <property type="match status" value="1"/>
</dbReference>
<dbReference type="CDD" id="cd08200">
    <property type="entry name" value="catalase_peroxidase_2"/>
    <property type="match status" value="1"/>
</dbReference>
<dbReference type="FunFam" id="1.10.420.10:FF:000002">
    <property type="entry name" value="Catalase-peroxidase"/>
    <property type="match status" value="1"/>
</dbReference>
<dbReference type="FunFam" id="1.10.420.10:FF:000004">
    <property type="entry name" value="Catalase-peroxidase"/>
    <property type="match status" value="1"/>
</dbReference>
<dbReference type="FunFam" id="1.10.520.10:FF:000002">
    <property type="entry name" value="Catalase-peroxidase"/>
    <property type="match status" value="1"/>
</dbReference>
<dbReference type="Gene3D" id="1.10.520.10">
    <property type="match status" value="2"/>
</dbReference>
<dbReference type="Gene3D" id="1.10.420.10">
    <property type="entry name" value="Peroxidase, domain 2"/>
    <property type="match status" value="2"/>
</dbReference>
<dbReference type="HAMAP" id="MF_01961">
    <property type="entry name" value="Catal_peroxid"/>
    <property type="match status" value="1"/>
</dbReference>
<dbReference type="InterPro" id="IPR000763">
    <property type="entry name" value="Catalase_peroxidase"/>
</dbReference>
<dbReference type="InterPro" id="IPR002016">
    <property type="entry name" value="Haem_peroxidase"/>
</dbReference>
<dbReference type="InterPro" id="IPR010255">
    <property type="entry name" value="Haem_peroxidase_sf"/>
</dbReference>
<dbReference type="InterPro" id="IPR019794">
    <property type="entry name" value="Peroxidases_AS"/>
</dbReference>
<dbReference type="InterPro" id="IPR019793">
    <property type="entry name" value="Peroxidases_heam-ligand_BS"/>
</dbReference>
<dbReference type="NCBIfam" id="TIGR00198">
    <property type="entry name" value="cat_per_HPI"/>
    <property type="match status" value="1"/>
</dbReference>
<dbReference type="NCBIfam" id="NF011635">
    <property type="entry name" value="PRK15061.1"/>
    <property type="match status" value="1"/>
</dbReference>
<dbReference type="PANTHER" id="PTHR30555:SF0">
    <property type="entry name" value="CATALASE-PEROXIDASE"/>
    <property type="match status" value="1"/>
</dbReference>
<dbReference type="PANTHER" id="PTHR30555">
    <property type="entry name" value="HYDROPEROXIDASE I, BIFUNCTIONAL CATALASE-PEROXIDASE"/>
    <property type="match status" value="1"/>
</dbReference>
<dbReference type="Pfam" id="PF00141">
    <property type="entry name" value="peroxidase"/>
    <property type="match status" value="2"/>
</dbReference>
<dbReference type="PRINTS" id="PR00460">
    <property type="entry name" value="BPEROXIDASE"/>
</dbReference>
<dbReference type="PRINTS" id="PR00458">
    <property type="entry name" value="PEROXIDASE"/>
</dbReference>
<dbReference type="SUPFAM" id="SSF48113">
    <property type="entry name" value="Heme-dependent peroxidases"/>
    <property type="match status" value="2"/>
</dbReference>
<dbReference type="PROSITE" id="PS00435">
    <property type="entry name" value="PEROXIDASE_1"/>
    <property type="match status" value="1"/>
</dbReference>
<dbReference type="PROSITE" id="PS00436">
    <property type="entry name" value="PEROXIDASE_2"/>
    <property type="match status" value="1"/>
</dbReference>
<dbReference type="PROSITE" id="PS50873">
    <property type="entry name" value="PEROXIDASE_4"/>
    <property type="match status" value="1"/>
</dbReference>
<reference key="1">
    <citation type="journal article" date="2005" name="Genome Res.">
        <title>Comparative and functional genomic analyses of the pathogenicity of phytopathogen Xanthomonas campestris pv. campestris.</title>
        <authorList>
            <person name="Qian W."/>
            <person name="Jia Y."/>
            <person name="Ren S.-X."/>
            <person name="He Y.-Q."/>
            <person name="Feng J.-X."/>
            <person name="Lu L.-F."/>
            <person name="Sun Q."/>
            <person name="Ying G."/>
            <person name="Tang D.-J."/>
            <person name="Tang H."/>
            <person name="Wu W."/>
            <person name="Hao P."/>
            <person name="Wang L."/>
            <person name="Jiang B.-L."/>
            <person name="Zeng S."/>
            <person name="Gu W.-Y."/>
            <person name="Lu G."/>
            <person name="Rong L."/>
            <person name="Tian Y."/>
            <person name="Yao Z."/>
            <person name="Fu G."/>
            <person name="Chen B."/>
            <person name="Fang R."/>
            <person name="Qiang B."/>
            <person name="Chen Z."/>
            <person name="Zhao G.-P."/>
            <person name="Tang J.-L."/>
            <person name="He C."/>
        </authorList>
    </citation>
    <scope>NUCLEOTIDE SEQUENCE [LARGE SCALE GENOMIC DNA]</scope>
    <source>
        <strain>8004</strain>
    </source>
</reference>
<proteinExistence type="inferred from homology"/>
<protein>
    <recommendedName>
        <fullName evidence="1">Catalase-peroxidase</fullName>
        <shortName evidence="1">CP</shortName>
        <ecNumber evidence="1">1.11.1.21</ecNumber>
    </recommendedName>
    <alternativeName>
        <fullName evidence="1">Peroxidase/catalase</fullName>
    </alternativeName>
</protein>
<accession>Q4US88</accession>
<gene>
    <name evidence="1" type="primary">katG</name>
    <name type="ordered locus">XC_3037</name>
</gene>
<comment type="function">
    <text evidence="1">Bifunctional enzyme with both catalase and broad-spectrum peroxidase activity.</text>
</comment>
<comment type="catalytic activity">
    <reaction evidence="1">
        <text>H2O2 + AH2 = A + 2 H2O</text>
        <dbReference type="Rhea" id="RHEA:30275"/>
        <dbReference type="ChEBI" id="CHEBI:13193"/>
        <dbReference type="ChEBI" id="CHEBI:15377"/>
        <dbReference type="ChEBI" id="CHEBI:16240"/>
        <dbReference type="ChEBI" id="CHEBI:17499"/>
        <dbReference type="EC" id="1.11.1.21"/>
    </reaction>
</comment>
<comment type="catalytic activity">
    <reaction evidence="1">
        <text>2 H2O2 = O2 + 2 H2O</text>
        <dbReference type="Rhea" id="RHEA:20309"/>
        <dbReference type="ChEBI" id="CHEBI:15377"/>
        <dbReference type="ChEBI" id="CHEBI:15379"/>
        <dbReference type="ChEBI" id="CHEBI:16240"/>
        <dbReference type="EC" id="1.11.1.21"/>
    </reaction>
</comment>
<comment type="cofactor">
    <cofactor evidence="1">
        <name>heme b</name>
        <dbReference type="ChEBI" id="CHEBI:60344"/>
    </cofactor>
    <text evidence="1">Binds 1 heme b (iron(II)-protoporphyrin IX) group per dimer.</text>
</comment>
<comment type="subunit">
    <text evidence="1">Homodimer or homotetramer.</text>
</comment>
<comment type="PTM">
    <text evidence="1">Formation of the three residue Trp-Tyr-Met cross-link is important for the catalase, but not the peroxidase activity of the enzyme.</text>
</comment>
<comment type="similarity">
    <text evidence="1">Belongs to the peroxidase family. Peroxidase/catalase subfamily.</text>
</comment>
<name>KATG_XANC8</name>